<organism>
    <name type="scientific">Phytoplasma australiense</name>
    <dbReference type="NCBI Taxonomy" id="59748"/>
    <lineage>
        <taxon>Bacteria</taxon>
        <taxon>Bacillati</taxon>
        <taxon>Mycoplasmatota</taxon>
        <taxon>Mollicutes</taxon>
        <taxon>Acholeplasmatales</taxon>
        <taxon>Acholeplasmataceae</taxon>
        <taxon>Candidatus Phytoplasma</taxon>
        <taxon>16SrXII (Stolbur group)</taxon>
    </lineage>
</organism>
<comment type="function">
    <text evidence="1">Involved in mRNA degradation. Catalyzes the phosphorolysis of single-stranded polyribonucleotides processively in the 3'- to 5'-direction.</text>
</comment>
<comment type="catalytic activity">
    <reaction evidence="1">
        <text>RNA(n+1) + phosphate = RNA(n) + a ribonucleoside 5'-diphosphate</text>
        <dbReference type="Rhea" id="RHEA:22096"/>
        <dbReference type="Rhea" id="RHEA-COMP:14527"/>
        <dbReference type="Rhea" id="RHEA-COMP:17342"/>
        <dbReference type="ChEBI" id="CHEBI:43474"/>
        <dbReference type="ChEBI" id="CHEBI:57930"/>
        <dbReference type="ChEBI" id="CHEBI:140395"/>
        <dbReference type="EC" id="2.7.7.8"/>
    </reaction>
</comment>
<comment type="cofactor">
    <cofactor evidence="1">
        <name>Mg(2+)</name>
        <dbReference type="ChEBI" id="CHEBI:18420"/>
    </cofactor>
</comment>
<comment type="subcellular location">
    <subcellularLocation>
        <location evidence="1">Cytoplasm</location>
    </subcellularLocation>
</comment>
<comment type="similarity">
    <text evidence="1">Belongs to the polyribonucleotide nucleotidyltransferase family.</text>
</comment>
<sequence length="710" mass="80156">MLKQVFETTDLKNSFQVEIGTYARNVDPSVLIRFQDTVVLTTTVFSNKKNNFDFLPLTVIYQEKFYAAGKIPGSFLRREGRSTDHEILSSRLIDRSLRPLFPKEFRQEIQVINTVLSSNPDFKSEIASILGSSLSLLISEIPFFEPVAGVYVAYIQNQFVINPNAQQLTNSPLHLLVAGTKKNVVMIEAHASEVSEEMFLEAIVFAHEYIKKLCLFQEDVQKKVGQTKKLIDLDAELQSLEKEFNEQYHEQTRTLVANVFEQDQKNDLQVFKKKILAKAQQKAFVKTIDQITFFDVEEQKNYLLLIENLFQKLFNQEMRNYIIKNKKRPDKRTLEEVRNLDSQIDLLPRPHGSALFTRGQTQSLAVVTLGTLSESKIIDDLSGESNKRFMLHYNFPPFAVGSIGRYAAPSRREIGHGNLAEKAILPLLPEENDFPYAIRVVSEILESNGSSSQATVCATSMSLMAAGVPLKRAVSGIAMGLFMDSKTNEYVILSDIQGLEDHIGDMDLKIAGSDKGITALQMDLKIEGISQAILKQAFFQAKKGRLHILEHMNKTIASPRKEMSQYAPKVQMFQIKPEKIRDVIGSAGKIINQIIENHDGVKIDIEQDGRIFVMHSNLETVKQAILFIKNLIQDAEVNSIYHAHISRFLNDKAGNILGAFAQVSPSIEGLIRFSKAKKENDVVKIGDKVLVKCVKINERGRIDFVLISKK</sequence>
<accession>B1VAN5</accession>
<reference key="1">
    <citation type="journal article" date="2008" name="J. Bacteriol.">
        <title>Comparative genome analysis of 'Candidatus Phytoplasma australiense' (subgroup tuf-Australia I; rp-A) and 'Ca. Phytoplasma asteris' strains OY-M and AY-WB.</title>
        <authorList>
            <person name="Tran-Nguyen L.T."/>
            <person name="Kube M."/>
            <person name="Schneider B."/>
            <person name="Reinhardt R."/>
            <person name="Gibb K.S."/>
        </authorList>
    </citation>
    <scope>NUCLEOTIDE SEQUENCE [LARGE SCALE GENOMIC DNA]</scope>
</reference>
<proteinExistence type="inferred from homology"/>
<gene>
    <name evidence="1" type="primary">pnp</name>
    <name type="ordered locus">PA0674</name>
</gene>
<feature type="chain" id="PRO_1000192481" description="Polyribonucleotide nucleotidyltransferase">
    <location>
        <begin position="1"/>
        <end position="710"/>
    </location>
</feature>
<feature type="domain" description="KH" evidence="1">
    <location>
        <begin position="568"/>
        <end position="628"/>
    </location>
</feature>
<feature type="domain" description="S1 motif" evidence="1">
    <location>
        <begin position="638"/>
        <end position="710"/>
    </location>
</feature>
<feature type="binding site" evidence="1">
    <location>
        <position position="501"/>
    </location>
    <ligand>
        <name>Mg(2+)</name>
        <dbReference type="ChEBI" id="CHEBI:18420"/>
    </ligand>
</feature>
<feature type="binding site" evidence="1">
    <location>
        <position position="507"/>
    </location>
    <ligand>
        <name>Mg(2+)</name>
        <dbReference type="ChEBI" id="CHEBI:18420"/>
    </ligand>
</feature>
<dbReference type="EC" id="2.7.7.8" evidence="1"/>
<dbReference type="EMBL" id="AM422018">
    <property type="protein sequence ID" value="CAM12008.1"/>
    <property type="molecule type" value="Genomic_DNA"/>
</dbReference>
<dbReference type="SMR" id="B1VAN5"/>
<dbReference type="STRING" id="59748.PA0674"/>
<dbReference type="KEGG" id="pal:PA0674"/>
<dbReference type="eggNOG" id="COG1185">
    <property type="taxonomic scope" value="Bacteria"/>
</dbReference>
<dbReference type="Proteomes" id="UP000008323">
    <property type="component" value="Chromosome"/>
</dbReference>
<dbReference type="GO" id="GO:0005829">
    <property type="term" value="C:cytosol"/>
    <property type="evidence" value="ECO:0007669"/>
    <property type="project" value="TreeGrafter"/>
</dbReference>
<dbReference type="GO" id="GO:0000175">
    <property type="term" value="F:3'-5'-RNA exonuclease activity"/>
    <property type="evidence" value="ECO:0007669"/>
    <property type="project" value="TreeGrafter"/>
</dbReference>
<dbReference type="GO" id="GO:0000287">
    <property type="term" value="F:magnesium ion binding"/>
    <property type="evidence" value="ECO:0007669"/>
    <property type="project" value="UniProtKB-UniRule"/>
</dbReference>
<dbReference type="GO" id="GO:0004654">
    <property type="term" value="F:polyribonucleotide nucleotidyltransferase activity"/>
    <property type="evidence" value="ECO:0007669"/>
    <property type="project" value="UniProtKB-UniRule"/>
</dbReference>
<dbReference type="GO" id="GO:0003723">
    <property type="term" value="F:RNA binding"/>
    <property type="evidence" value="ECO:0007669"/>
    <property type="project" value="UniProtKB-UniRule"/>
</dbReference>
<dbReference type="GO" id="GO:0006402">
    <property type="term" value="P:mRNA catabolic process"/>
    <property type="evidence" value="ECO:0007669"/>
    <property type="project" value="UniProtKB-UniRule"/>
</dbReference>
<dbReference type="GO" id="GO:0006396">
    <property type="term" value="P:RNA processing"/>
    <property type="evidence" value="ECO:0007669"/>
    <property type="project" value="InterPro"/>
</dbReference>
<dbReference type="CDD" id="cd02393">
    <property type="entry name" value="KH-I_PNPase"/>
    <property type="match status" value="1"/>
</dbReference>
<dbReference type="CDD" id="cd11364">
    <property type="entry name" value="RNase_PH_PNPase_2"/>
    <property type="match status" value="1"/>
</dbReference>
<dbReference type="FunFam" id="3.30.1370.10:FF:000001">
    <property type="entry name" value="Polyribonucleotide nucleotidyltransferase"/>
    <property type="match status" value="1"/>
</dbReference>
<dbReference type="FunFam" id="3.30.230.70:FF:000001">
    <property type="entry name" value="Polyribonucleotide nucleotidyltransferase"/>
    <property type="match status" value="1"/>
</dbReference>
<dbReference type="FunFam" id="3.30.230.70:FF:000002">
    <property type="entry name" value="Polyribonucleotide nucleotidyltransferase"/>
    <property type="match status" value="1"/>
</dbReference>
<dbReference type="Gene3D" id="3.30.230.70">
    <property type="entry name" value="GHMP Kinase, N-terminal domain"/>
    <property type="match status" value="2"/>
</dbReference>
<dbReference type="Gene3D" id="3.30.1370.10">
    <property type="entry name" value="K Homology domain, type 1"/>
    <property type="match status" value="1"/>
</dbReference>
<dbReference type="Gene3D" id="2.40.50.140">
    <property type="entry name" value="Nucleic acid-binding proteins"/>
    <property type="match status" value="1"/>
</dbReference>
<dbReference type="HAMAP" id="MF_01595">
    <property type="entry name" value="PNPase"/>
    <property type="match status" value="1"/>
</dbReference>
<dbReference type="InterPro" id="IPR001247">
    <property type="entry name" value="ExoRNase_PH_dom1"/>
</dbReference>
<dbReference type="InterPro" id="IPR015847">
    <property type="entry name" value="ExoRNase_PH_dom2"/>
</dbReference>
<dbReference type="InterPro" id="IPR036345">
    <property type="entry name" value="ExoRNase_PH_dom2_sf"/>
</dbReference>
<dbReference type="InterPro" id="IPR004087">
    <property type="entry name" value="KH_dom"/>
</dbReference>
<dbReference type="InterPro" id="IPR004088">
    <property type="entry name" value="KH_dom_type_1"/>
</dbReference>
<dbReference type="InterPro" id="IPR036612">
    <property type="entry name" value="KH_dom_type_1_sf"/>
</dbReference>
<dbReference type="InterPro" id="IPR012340">
    <property type="entry name" value="NA-bd_OB-fold"/>
</dbReference>
<dbReference type="InterPro" id="IPR012162">
    <property type="entry name" value="PNPase"/>
</dbReference>
<dbReference type="InterPro" id="IPR027408">
    <property type="entry name" value="PNPase/RNase_PH_dom_sf"/>
</dbReference>
<dbReference type="InterPro" id="IPR036456">
    <property type="entry name" value="PNPase_PH_RNA-bd_sf"/>
</dbReference>
<dbReference type="InterPro" id="IPR020568">
    <property type="entry name" value="Ribosomal_Su5_D2-typ_SF"/>
</dbReference>
<dbReference type="InterPro" id="IPR003029">
    <property type="entry name" value="S1_domain"/>
</dbReference>
<dbReference type="NCBIfam" id="TIGR03591">
    <property type="entry name" value="polynuc_phos"/>
    <property type="match status" value="1"/>
</dbReference>
<dbReference type="NCBIfam" id="NF008805">
    <property type="entry name" value="PRK11824.1"/>
    <property type="match status" value="1"/>
</dbReference>
<dbReference type="PANTHER" id="PTHR11252">
    <property type="entry name" value="POLYRIBONUCLEOTIDE NUCLEOTIDYLTRANSFERASE"/>
    <property type="match status" value="1"/>
</dbReference>
<dbReference type="PANTHER" id="PTHR11252:SF0">
    <property type="entry name" value="POLYRIBONUCLEOTIDE NUCLEOTIDYLTRANSFERASE 1, MITOCHONDRIAL"/>
    <property type="match status" value="1"/>
</dbReference>
<dbReference type="Pfam" id="PF00013">
    <property type="entry name" value="KH_1"/>
    <property type="match status" value="1"/>
</dbReference>
<dbReference type="Pfam" id="PF01138">
    <property type="entry name" value="RNase_PH"/>
    <property type="match status" value="2"/>
</dbReference>
<dbReference type="Pfam" id="PF03725">
    <property type="entry name" value="RNase_PH_C"/>
    <property type="match status" value="2"/>
</dbReference>
<dbReference type="PIRSF" id="PIRSF005499">
    <property type="entry name" value="PNPase"/>
    <property type="match status" value="1"/>
</dbReference>
<dbReference type="SMART" id="SM00322">
    <property type="entry name" value="KH"/>
    <property type="match status" value="1"/>
</dbReference>
<dbReference type="SMART" id="SM00316">
    <property type="entry name" value="S1"/>
    <property type="match status" value="1"/>
</dbReference>
<dbReference type="SUPFAM" id="SSF54791">
    <property type="entry name" value="Eukaryotic type KH-domain (KH-domain type I)"/>
    <property type="match status" value="1"/>
</dbReference>
<dbReference type="SUPFAM" id="SSF50249">
    <property type="entry name" value="Nucleic acid-binding proteins"/>
    <property type="match status" value="1"/>
</dbReference>
<dbReference type="SUPFAM" id="SSF46915">
    <property type="entry name" value="Polynucleotide phosphorylase/guanosine pentaphosphate synthase (PNPase/GPSI), domain 3"/>
    <property type="match status" value="1"/>
</dbReference>
<dbReference type="SUPFAM" id="SSF55666">
    <property type="entry name" value="Ribonuclease PH domain 2-like"/>
    <property type="match status" value="2"/>
</dbReference>
<dbReference type="SUPFAM" id="SSF54211">
    <property type="entry name" value="Ribosomal protein S5 domain 2-like"/>
    <property type="match status" value="2"/>
</dbReference>
<dbReference type="PROSITE" id="PS50084">
    <property type="entry name" value="KH_TYPE_1"/>
    <property type="match status" value="1"/>
</dbReference>
<dbReference type="PROSITE" id="PS50126">
    <property type="entry name" value="S1"/>
    <property type="match status" value="1"/>
</dbReference>
<keyword id="KW-0963">Cytoplasm</keyword>
<keyword id="KW-0460">Magnesium</keyword>
<keyword id="KW-0479">Metal-binding</keyword>
<keyword id="KW-0548">Nucleotidyltransferase</keyword>
<keyword id="KW-1185">Reference proteome</keyword>
<keyword id="KW-0694">RNA-binding</keyword>
<keyword id="KW-0808">Transferase</keyword>
<evidence type="ECO:0000255" key="1">
    <source>
        <dbReference type="HAMAP-Rule" id="MF_01595"/>
    </source>
</evidence>
<protein>
    <recommendedName>
        <fullName evidence="1">Polyribonucleotide nucleotidyltransferase</fullName>
        <ecNumber evidence="1">2.7.7.8</ecNumber>
    </recommendedName>
    <alternativeName>
        <fullName evidence="1">Polynucleotide phosphorylase</fullName>
        <shortName evidence="1">PNPase</shortName>
    </alternativeName>
</protein>
<name>PNP_PHYAS</name>